<keyword id="KW-1003">Cell membrane</keyword>
<keyword id="KW-0342">GTP-binding</keyword>
<keyword id="KW-0378">Hydrolase</keyword>
<keyword id="KW-0449">Lipoprotein</keyword>
<keyword id="KW-0472">Membrane</keyword>
<keyword id="KW-0488">Methylation</keyword>
<keyword id="KW-0547">Nucleotide-binding</keyword>
<keyword id="KW-0636">Prenylation</keyword>
<feature type="chain" id="PRO_0000082692" description="Ras-related protein O-RAL">
    <location>
        <begin position="1"/>
        <end position="203"/>
    </location>
</feature>
<feature type="propeptide" id="PRO_0000281343" description="Removed in mature form" evidence="1">
    <location>
        <begin position="204"/>
        <end position="206"/>
    </location>
</feature>
<feature type="region of interest" description="Disordered" evidence="2">
    <location>
        <begin position="180"/>
        <end position="206"/>
    </location>
</feature>
<feature type="short sequence motif" description="Effector region">
    <location>
        <begin position="43"/>
        <end position="51"/>
    </location>
</feature>
<feature type="compositionally biased region" description="Basic and acidic residues" evidence="2">
    <location>
        <begin position="180"/>
        <end position="189"/>
    </location>
</feature>
<feature type="binding site" evidence="1">
    <location>
        <begin position="21"/>
        <end position="28"/>
    </location>
    <ligand>
        <name>GTP</name>
        <dbReference type="ChEBI" id="CHEBI:37565"/>
    </ligand>
</feature>
<feature type="binding site" evidence="1">
    <location>
        <begin position="68"/>
        <end position="72"/>
    </location>
    <ligand>
        <name>GTP</name>
        <dbReference type="ChEBI" id="CHEBI:37565"/>
    </ligand>
</feature>
<feature type="binding site" evidence="1">
    <location>
        <begin position="128"/>
        <end position="131"/>
    </location>
    <ligand>
        <name>GTP</name>
        <dbReference type="ChEBI" id="CHEBI:37565"/>
    </ligand>
</feature>
<feature type="modified residue" description="Cysteine methyl ester" evidence="1">
    <location>
        <position position="203"/>
    </location>
</feature>
<feature type="lipid moiety-binding region" description="S-geranylgeranyl cysteine" evidence="1">
    <location>
        <position position="203"/>
    </location>
</feature>
<accession>P22124</accession>
<dbReference type="EC" id="3.6.5.2" evidence="3"/>
<dbReference type="EMBL" id="M38394">
    <property type="protein sequence ID" value="AAA49231.1"/>
    <property type="molecule type" value="mRNA"/>
</dbReference>
<dbReference type="PIR" id="E38625">
    <property type="entry name" value="E38625"/>
</dbReference>
<dbReference type="SMR" id="P22124"/>
<dbReference type="GO" id="GO:0005886">
    <property type="term" value="C:plasma membrane"/>
    <property type="evidence" value="ECO:0007669"/>
    <property type="project" value="UniProtKB-SubCell"/>
</dbReference>
<dbReference type="GO" id="GO:0003925">
    <property type="term" value="F:G protein activity"/>
    <property type="evidence" value="ECO:0007669"/>
    <property type="project" value="UniProtKB-EC"/>
</dbReference>
<dbReference type="GO" id="GO:0005525">
    <property type="term" value="F:GTP binding"/>
    <property type="evidence" value="ECO:0007669"/>
    <property type="project" value="UniProtKB-KW"/>
</dbReference>
<dbReference type="GO" id="GO:0007165">
    <property type="term" value="P:signal transduction"/>
    <property type="evidence" value="ECO:0007669"/>
    <property type="project" value="InterPro"/>
</dbReference>
<dbReference type="CDD" id="cd04139">
    <property type="entry name" value="RalA_RalB"/>
    <property type="match status" value="1"/>
</dbReference>
<dbReference type="FunFam" id="3.40.50.300:FF:000203">
    <property type="entry name" value="Putative ras-related protein ral-a"/>
    <property type="match status" value="1"/>
</dbReference>
<dbReference type="Gene3D" id="3.40.50.300">
    <property type="entry name" value="P-loop containing nucleotide triphosphate hydrolases"/>
    <property type="match status" value="1"/>
</dbReference>
<dbReference type="InterPro" id="IPR027417">
    <property type="entry name" value="P-loop_NTPase"/>
</dbReference>
<dbReference type="InterPro" id="IPR005225">
    <property type="entry name" value="Small_GTP-bd"/>
</dbReference>
<dbReference type="InterPro" id="IPR001806">
    <property type="entry name" value="Small_GTPase"/>
</dbReference>
<dbReference type="InterPro" id="IPR020849">
    <property type="entry name" value="Small_GTPase_Ras-type"/>
</dbReference>
<dbReference type="NCBIfam" id="TIGR00231">
    <property type="entry name" value="small_GTP"/>
    <property type="match status" value="1"/>
</dbReference>
<dbReference type="PANTHER" id="PTHR24070">
    <property type="entry name" value="RAS, DI-RAS, AND RHEB FAMILY MEMBERS OF SMALL GTPASE SUPERFAMILY"/>
    <property type="match status" value="1"/>
</dbReference>
<dbReference type="Pfam" id="PF00071">
    <property type="entry name" value="Ras"/>
    <property type="match status" value="1"/>
</dbReference>
<dbReference type="PRINTS" id="PR00449">
    <property type="entry name" value="RASTRNSFRMNG"/>
</dbReference>
<dbReference type="SMART" id="SM00175">
    <property type="entry name" value="RAB"/>
    <property type="match status" value="1"/>
</dbReference>
<dbReference type="SMART" id="SM00176">
    <property type="entry name" value="RAN"/>
    <property type="match status" value="1"/>
</dbReference>
<dbReference type="SMART" id="SM00173">
    <property type="entry name" value="RAS"/>
    <property type="match status" value="1"/>
</dbReference>
<dbReference type="SMART" id="SM00174">
    <property type="entry name" value="RHO"/>
    <property type="match status" value="1"/>
</dbReference>
<dbReference type="SUPFAM" id="SSF52540">
    <property type="entry name" value="P-loop containing nucleoside triphosphate hydrolases"/>
    <property type="match status" value="1"/>
</dbReference>
<dbReference type="PROSITE" id="PS51421">
    <property type="entry name" value="RAS"/>
    <property type="match status" value="1"/>
</dbReference>
<protein>
    <recommendedName>
        <fullName>Ras-related protein O-RAL</fullName>
        <ecNumber evidence="3">3.6.5.2</ecNumber>
    </recommendedName>
</protein>
<reference key="1">
    <citation type="journal article" date="1991" name="J. Biol. Chem.">
        <title>A family of ras-like GTP-binding proteins expressed in electromotor neurons.</title>
        <authorList>
            <person name="Ngsee J.K."/>
            <person name="Elferink L.A."/>
            <person name="Scheller R.H."/>
        </authorList>
    </citation>
    <scope>NUCLEOTIDE SEQUENCE [MRNA]</scope>
    <source>
        <tissue>Electric lobe</tissue>
    </source>
</reference>
<organism>
    <name type="scientific">Diplobatis ommata</name>
    <name type="common">Ocellated electric ray</name>
    <name type="synonym">Discopyge ommata</name>
    <dbReference type="NCBI Taxonomy" id="1870830"/>
    <lineage>
        <taxon>Eukaryota</taxon>
        <taxon>Metazoa</taxon>
        <taxon>Chordata</taxon>
        <taxon>Craniata</taxon>
        <taxon>Vertebrata</taxon>
        <taxon>Chondrichthyes</taxon>
        <taxon>Elasmobranchii</taxon>
        <taxon>Batoidea</taxon>
        <taxon>Torpediniformes</taxon>
        <taxon>Narcinidae</taxon>
        <taxon>Diplobatis</taxon>
    </lineage>
</organism>
<evidence type="ECO:0000250" key="1"/>
<evidence type="ECO:0000256" key="2">
    <source>
        <dbReference type="SAM" id="MobiDB-lite"/>
    </source>
</evidence>
<evidence type="ECO:0000305" key="3"/>
<comment type="catalytic activity">
    <reaction evidence="3">
        <text>GTP + H2O = GDP + phosphate + H(+)</text>
        <dbReference type="Rhea" id="RHEA:19669"/>
        <dbReference type="ChEBI" id="CHEBI:15377"/>
        <dbReference type="ChEBI" id="CHEBI:15378"/>
        <dbReference type="ChEBI" id="CHEBI:37565"/>
        <dbReference type="ChEBI" id="CHEBI:43474"/>
        <dbReference type="ChEBI" id="CHEBI:58189"/>
        <dbReference type="EC" id="3.6.5.2"/>
    </reaction>
</comment>
<comment type="subcellular location">
    <subcellularLocation>
        <location evidence="3">Cell membrane</location>
        <topology evidence="3">Lipid-anchor</topology>
        <orientation evidence="3">Cytoplasmic side</orientation>
    </subcellularLocation>
</comment>
<comment type="similarity">
    <text evidence="3">Belongs to the small GTPase superfamily. Ras family.</text>
</comment>
<sequence>MAANKNKNQSSLALHKVIMVGSGGVGKSALTLQFMYDEFVEDYEPTKADSYRKKVVLDGEEVQIDILDTAGQEDYAAIRDNYFRSGEGFLCVFSITEQESFTATVEFREQILRVKAEEDKIPLLLVGNKSDLEDRRQVSIEEARSKAEEWGVQYVETSAKTRANVDKVFFDLMREVRAKKMSENKDKNGKKSSRNKKSLRERCCIL</sequence>
<name>RAL_DIPOM</name>
<proteinExistence type="evidence at transcript level"/>